<dbReference type="EC" id="2.6.1.52" evidence="1"/>
<dbReference type="EMBL" id="CP000675">
    <property type="protein sequence ID" value="ABQ54810.1"/>
    <property type="molecule type" value="Genomic_DNA"/>
</dbReference>
<dbReference type="RefSeq" id="WP_011946432.1">
    <property type="nucleotide sequence ID" value="NZ_JAPMSS010000002.1"/>
</dbReference>
<dbReference type="SMR" id="A5IBR0"/>
<dbReference type="KEGG" id="lpc:LPC_0834"/>
<dbReference type="HOGENOM" id="CLU_034866_0_2_6"/>
<dbReference type="UniPathway" id="UPA00135">
    <property type="reaction ID" value="UER00197"/>
</dbReference>
<dbReference type="UniPathway" id="UPA00244">
    <property type="reaction ID" value="UER00311"/>
</dbReference>
<dbReference type="GO" id="GO:0005737">
    <property type="term" value="C:cytoplasm"/>
    <property type="evidence" value="ECO:0007669"/>
    <property type="project" value="UniProtKB-SubCell"/>
</dbReference>
<dbReference type="GO" id="GO:0004648">
    <property type="term" value="F:O-phospho-L-serine:2-oxoglutarate aminotransferase activity"/>
    <property type="evidence" value="ECO:0007669"/>
    <property type="project" value="UniProtKB-UniRule"/>
</dbReference>
<dbReference type="GO" id="GO:0030170">
    <property type="term" value="F:pyridoxal phosphate binding"/>
    <property type="evidence" value="ECO:0007669"/>
    <property type="project" value="UniProtKB-UniRule"/>
</dbReference>
<dbReference type="GO" id="GO:0006564">
    <property type="term" value="P:L-serine biosynthetic process"/>
    <property type="evidence" value="ECO:0007669"/>
    <property type="project" value="UniProtKB-UniRule"/>
</dbReference>
<dbReference type="GO" id="GO:0008615">
    <property type="term" value="P:pyridoxine biosynthetic process"/>
    <property type="evidence" value="ECO:0007669"/>
    <property type="project" value="UniProtKB-UniRule"/>
</dbReference>
<dbReference type="FunFam" id="3.40.640.10:FF:000010">
    <property type="entry name" value="Phosphoserine aminotransferase"/>
    <property type="match status" value="1"/>
</dbReference>
<dbReference type="FunFam" id="3.90.1150.10:FF:000006">
    <property type="entry name" value="Phosphoserine aminotransferase"/>
    <property type="match status" value="1"/>
</dbReference>
<dbReference type="Gene3D" id="3.90.1150.10">
    <property type="entry name" value="Aspartate Aminotransferase, domain 1"/>
    <property type="match status" value="1"/>
</dbReference>
<dbReference type="Gene3D" id="3.40.640.10">
    <property type="entry name" value="Type I PLP-dependent aspartate aminotransferase-like (Major domain)"/>
    <property type="match status" value="1"/>
</dbReference>
<dbReference type="HAMAP" id="MF_00160">
    <property type="entry name" value="SerC_aminotrans_5"/>
    <property type="match status" value="1"/>
</dbReference>
<dbReference type="InterPro" id="IPR000192">
    <property type="entry name" value="Aminotrans_V_dom"/>
</dbReference>
<dbReference type="InterPro" id="IPR020578">
    <property type="entry name" value="Aminotrans_V_PyrdxlP_BS"/>
</dbReference>
<dbReference type="InterPro" id="IPR022278">
    <property type="entry name" value="Pser_aminoTfrase"/>
</dbReference>
<dbReference type="InterPro" id="IPR015424">
    <property type="entry name" value="PyrdxlP-dep_Trfase"/>
</dbReference>
<dbReference type="InterPro" id="IPR015421">
    <property type="entry name" value="PyrdxlP-dep_Trfase_major"/>
</dbReference>
<dbReference type="InterPro" id="IPR015422">
    <property type="entry name" value="PyrdxlP-dep_Trfase_small"/>
</dbReference>
<dbReference type="NCBIfam" id="NF003764">
    <property type="entry name" value="PRK05355.1"/>
    <property type="match status" value="1"/>
</dbReference>
<dbReference type="NCBIfam" id="TIGR01364">
    <property type="entry name" value="serC_1"/>
    <property type="match status" value="1"/>
</dbReference>
<dbReference type="PANTHER" id="PTHR43247">
    <property type="entry name" value="PHOSPHOSERINE AMINOTRANSFERASE"/>
    <property type="match status" value="1"/>
</dbReference>
<dbReference type="PANTHER" id="PTHR43247:SF1">
    <property type="entry name" value="PHOSPHOSERINE AMINOTRANSFERASE"/>
    <property type="match status" value="1"/>
</dbReference>
<dbReference type="Pfam" id="PF00266">
    <property type="entry name" value="Aminotran_5"/>
    <property type="match status" value="1"/>
</dbReference>
<dbReference type="PIRSF" id="PIRSF000525">
    <property type="entry name" value="SerC"/>
    <property type="match status" value="1"/>
</dbReference>
<dbReference type="SUPFAM" id="SSF53383">
    <property type="entry name" value="PLP-dependent transferases"/>
    <property type="match status" value="1"/>
</dbReference>
<dbReference type="PROSITE" id="PS00595">
    <property type="entry name" value="AA_TRANSFER_CLASS_5"/>
    <property type="match status" value="1"/>
</dbReference>
<comment type="function">
    <text evidence="1">Catalyzes the reversible conversion of 3-phosphohydroxypyruvate to phosphoserine and of 3-hydroxy-2-oxo-4-phosphonooxybutanoate to phosphohydroxythreonine.</text>
</comment>
<comment type="catalytic activity">
    <reaction evidence="1">
        <text>O-phospho-L-serine + 2-oxoglutarate = 3-phosphooxypyruvate + L-glutamate</text>
        <dbReference type="Rhea" id="RHEA:14329"/>
        <dbReference type="ChEBI" id="CHEBI:16810"/>
        <dbReference type="ChEBI" id="CHEBI:18110"/>
        <dbReference type="ChEBI" id="CHEBI:29985"/>
        <dbReference type="ChEBI" id="CHEBI:57524"/>
        <dbReference type="EC" id="2.6.1.52"/>
    </reaction>
</comment>
<comment type="catalytic activity">
    <reaction evidence="1">
        <text>4-(phosphooxy)-L-threonine + 2-oxoglutarate = (R)-3-hydroxy-2-oxo-4-phosphooxybutanoate + L-glutamate</text>
        <dbReference type="Rhea" id="RHEA:16573"/>
        <dbReference type="ChEBI" id="CHEBI:16810"/>
        <dbReference type="ChEBI" id="CHEBI:29985"/>
        <dbReference type="ChEBI" id="CHEBI:58452"/>
        <dbReference type="ChEBI" id="CHEBI:58538"/>
        <dbReference type="EC" id="2.6.1.52"/>
    </reaction>
</comment>
<comment type="cofactor">
    <cofactor evidence="1">
        <name>pyridoxal 5'-phosphate</name>
        <dbReference type="ChEBI" id="CHEBI:597326"/>
    </cofactor>
    <text evidence="1">Binds 1 pyridoxal phosphate per subunit.</text>
</comment>
<comment type="pathway">
    <text evidence="1">Amino-acid biosynthesis; L-serine biosynthesis; L-serine from 3-phospho-D-glycerate: step 2/3.</text>
</comment>
<comment type="pathway">
    <text evidence="1">Cofactor biosynthesis; pyridoxine 5'-phosphate biosynthesis; pyridoxine 5'-phosphate from D-erythrose 4-phosphate: step 3/5.</text>
</comment>
<comment type="subunit">
    <text evidence="1">Homodimer.</text>
</comment>
<comment type="subcellular location">
    <subcellularLocation>
        <location evidence="1">Cytoplasm</location>
    </subcellularLocation>
</comment>
<comment type="similarity">
    <text evidence="1">Belongs to the class-V pyridoxal-phosphate-dependent aminotransferase family. SerC subfamily.</text>
</comment>
<name>SERC_LEGPC</name>
<sequence length="362" mass="40834">MNSRVFNFGAGPAMLPEEILKEAQEEFLNWRNTGMSILEIGHRTPEIINLLSTAEQSLRELLNIPKNYHVLFLGGAARAQFAMIPMNLLQPGDEAAYFITGIWSKMAYHEANLLKQAYYLSNEEKEGFVSIPDYQKWELKSNTAYVYYTPNETINGVRFPYVPKTGGVPLVADMTSCLLSEPININQYGLIFAGAQKNIANAGLTVVIIHEDLLKNQPEPVIPTMLNYKNHAEHRSLYATPPVFNCYLASKMFEWIKTQGGIEGLFQRNCLKAAKLYQYLDSTDFYLTPVSKEARSIMNICFSLCYPDLEQKFLYMANERGLKALKGHRFAGGLRASLYNAMPMAGVDALIEFLSEFAKENG</sequence>
<gene>
    <name evidence="1" type="primary">serC</name>
    <name type="ordered locus">LPC_0834</name>
</gene>
<keyword id="KW-0028">Amino-acid biosynthesis</keyword>
<keyword id="KW-0032">Aminotransferase</keyword>
<keyword id="KW-0963">Cytoplasm</keyword>
<keyword id="KW-0663">Pyridoxal phosphate</keyword>
<keyword id="KW-0664">Pyridoxine biosynthesis</keyword>
<keyword id="KW-0718">Serine biosynthesis</keyword>
<keyword id="KW-0808">Transferase</keyword>
<reference key="1">
    <citation type="submission" date="2006-11" db="EMBL/GenBank/DDBJ databases">
        <title>Identification and characterization of a new conjugation/ type IVA secretion system (trb/tra) of L. pneumophila Corby localized on a mobile genomic island.</title>
        <authorList>
            <person name="Gloeckner G."/>
            <person name="Albert-Weissenberger C."/>
            <person name="Weinmann E."/>
            <person name="Jacobi S."/>
            <person name="Schunder E."/>
            <person name="Steinert M."/>
            <person name="Buchrieser C."/>
            <person name="Hacker J."/>
            <person name="Heuner K."/>
        </authorList>
    </citation>
    <scope>NUCLEOTIDE SEQUENCE [LARGE SCALE GENOMIC DNA]</scope>
    <source>
        <strain>Corby</strain>
    </source>
</reference>
<protein>
    <recommendedName>
        <fullName evidence="1">Phosphoserine aminotransferase</fullName>
        <ecNumber evidence="1">2.6.1.52</ecNumber>
    </recommendedName>
    <alternativeName>
        <fullName evidence="1">Phosphohydroxythreonine aminotransferase</fullName>
        <shortName evidence="1">PSAT</shortName>
    </alternativeName>
</protein>
<evidence type="ECO:0000255" key="1">
    <source>
        <dbReference type="HAMAP-Rule" id="MF_00160"/>
    </source>
</evidence>
<accession>A5IBR0</accession>
<organism>
    <name type="scientific">Legionella pneumophila (strain Corby)</name>
    <dbReference type="NCBI Taxonomy" id="400673"/>
    <lineage>
        <taxon>Bacteria</taxon>
        <taxon>Pseudomonadati</taxon>
        <taxon>Pseudomonadota</taxon>
        <taxon>Gammaproteobacteria</taxon>
        <taxon>Legionellales</taxon>
        <taxon>Legionellaceae</taxon>
        <taxon>Legionella</taxon>
    </lineage>
</organism>
<feature type="chain" id="PRO_1000058215" description="Phosphoserine aminotransferase">
    <location>
        <begin position="1"/>
        <end position="362"/>
    </location>
</feature>
<feature type="binding site" evidence="1">
    <location>
        <position position="43"/>
    </location>
    <ligand>
        <name>L-glutamate</name>
        <dbReference type="ChEBI" id="CHEBI:29985"/>
    </ligand>
</feature>
<feature type="binding site" evidence="1">
    <location>
        <begin position="77"/>
        <end position="78"/>
    </location>
    <ligand>
        <name>pyridoxal 5'-phosphate</name>
        <dbReference type="ChEBI" id="CHEBI:597326"/>
    </ligand>
</feature>
<feature type="binding site" evidence="1">
    <location>
        <position position="103"/>
    </location>
    <ligand>
        <name>pyridoxal 5'-phosphate</name>
        <dbReference type="ChEBI" id="CHEBI:597326"/>
    </ligand>
</feature>
<feature type="binding site" evidence="1">
    <location>
        <position position="153"/>
    </location>
    <ligand>
        <name>pyridoxal 5'-phosphate</name>
        <dbReference type="ChEBI" id="CHEBI:597326"/>
    </ligand>
</feature>
<feature type="binding site" evidence="1">
    <location>
        <position position="173"/>
    </location>
    <ligand>
        <name>pyridoxal 5'-phosphate</name>
        <dbReference type="ChEBI" id="CHEBI:597326"/>
    </ligand>
</feature>
<feature type="binding site" evidence="1">
    <location>
        <position position="196"/>
    </location>
    <ligand>
        <name>pyridoxal 5'-phosphate</name>
        <dbReference type="ChEBI" id="CHEBI:597326"/>
    </ligand>
</feature>
<feature type="modified residue" description="N6-(pyridoxal phosphate)lysine" evidence="1">
    <location>
        <position position="197"/>
    </location>
</feature>
<proteinExistence type="inferred from homology"/>